<organism>
    <name type="scientific">Chloroherpeton thalassium (strain ATCC 35110 / GB-78)</name>
    <dbReference type="NCBI Taxonomy" id="517418"/>
    <lineage>
        <taxon>Bacteria</taxon>
        <taxon>Pseudomonadati</taxon>
        <taxon>Chlorobiota</taxon>
        <taxon>Chlorobiia</taxon>
        <taxon>Chlorobiales</taxon>
        <taxon>Chloroherpetonaceae</taxon>
        <taxon>Chloroherpeton</taxon>
    </lineage>
</organism>
<dbReference type="EMBL" id="CP001100">
    <property type="protein sequence ID" value="ACF13574.1"/>
    <property type="molecule type" value="Genomic_DNA"/>
</dbReference>
<dbReference type="RefSeq" id="WP_012499658.1">
    <property type="nucleotide sequence ID" value="NC_011026.1"/>
</dbReference>
<dbReference type="SMR" id="B3QYE6"/>
<dbReference type="STRING" id="517418.Ctha_1110"/>
<dbReference type="KEGG" id="cts:Ctha_1110"/>
<dbReference type="eggNOG" id="COG0257">
    <property type="taxonomic scope" value="Bacteria"/>
</dbReference>
<dbReference type="HOGENOM" id="CLU_135723_3_3_10"/>
<dbReference type="OrthoDB" id="9801558at2"/>
<dbReference type="Proteomes" id="UP000001208">
    <property type="component" value="Chromosome"/>
</dbReference>
<dbReference type="GO" id="GO:1990904">
    <property type="term" value="C:ribonucleoprotein complex"/>
    <property type="evidence" value="ECO:0007669"/>
    <property type="project" value="UniProtKB-KW"/>
</dbReference>
<dbReference type="GO" id="GO:0005840">
    <property type="term" value="C:ribosome"/>
    <property type="evidence" value="ECO:0007669"/>
    <property type="project" value="UniProtKB-KW"/>
</dbReference>
<dbReference type="GO" id="GO:0003735">
    <property type="term" value="F:structural constituent of ribosome"/>
    <property type="evidence" value="ECO:0007669"/>
    <property type="project" value="InterPro"/>
</dbReference>
<dbReference type="GO" id="GO:0006412">
    <property type="term" value="P:translation"/>
    <property type="evidence" value="ECO:0007669"/>
    <property type="project" value="UniProtKB-UniRule"/>
</dbReference>
<dbReference type="HAMAP" id="MF_00251">
    <property type="entry name" value="Ribosomal_bL36"/>
    <property type="match status" value="1"/>
</dbReference>
<dbReference type="InterPro" id="IPR000473">
    <property type="entry name" value="Ribosomal_bL36"/>
</dbReference>
<dbReference type="InterPro" id="IPR035977">
    <property type="entry name" value="Ribosomal_bL36_sp"/>
</dbReference>
<dbReference type="InterPro" id="IPR052010">
    <property type="entry name" value="Ribosomal_LSU_bL36"/>
</dbReference>
<dbReference type="NCBIfam" id="TIGR01022">
    <property type="entry name" value="rpmJ_bact"/>
    <property type="match status" value="1"/>
</dbReference>
<dbReference type="PANTHER" id="PTHR18804">
    <property type="entry name" value="RIBOSOMAL PROTEIN"/>
    <property type="match status" value="1"/>
</dbReference>
<dbReference type="PANTHER" id="PTHR18804:SF16">
    <property type="entry name" value="RIBOSOMAL PROTEIN"/>
    <property type="match status" value="1"/>
</dbReference>
<dbReference type="Pfam" id="PF00444">
    <property type="entry name" value="Ribosomal_L36"/>
    <property type="match status" value="1"/>
</dbReference>
<dbReference type="SUPFAM" id="SSF57840">
    <property type="entry name" value="Ribosomal protein L36"/>
    <property type="match status" value="1"/>
</dbReference>
<dbReference type="PROSITE" id="PS00828">
    <property type="entry name" value="RIBOSOMAL_L36"/>
    <property type="match status" value="1"/>
</dbReference>
<sequence length="38" mass="4389">MKVSSSVGKRCESCKIIRRKGKIYVICKKNPNHKQRQG</sequence>
<proteinExistence type="inferred from homology"/>
<protein>
    <recommendedName>
        <fullName evidence="1">Large ribosomal subunit protein bL36</fullName>
    </recommendedName>
    <alternativeName>
        <fullName evidence="2">50S ribosomal protein L36</fullName>
    </alternativeName>
</protein>
<feature type="chain" id="PRO_1000101017" description="Large ribosomal subunit protein bL36">
    <location>
        <begin position="1"/>
        <end position="38"/>
    </location>
</feature>
<evidence type="ECO:0000255" key="1">
    <source>
        <dbReference type="HAMAP-Rule" id="MF_00251"/>
    </source>
</evidence>
<evidence type="ECO:0000305" key="2"/>
<name>RL36_CHLT3</name>
<keyword id="KW-1185">Reference proteome</keyword>
<keyword id="KW-0687">Ribonucleoprotein</keyword>
<keyword id="KW-0689">Ribosomal protein</keyword>
<accession>B3QYE6</accession>
<comment type="similarity">
    <text evidence="1">Belongs to the bacterial ribosomal protein bL36 family.</text>
</comment>
<reference key="1">
    <citation type="submission" date="2008-06" db="EMBL/GenBank/DDBJ databases">
        <title>Complete sequence of Chloroherpeton thalassium ATCC 35110.</title>
        <authorList>
            <consortium name="US DOE Joint Genome Institute"/>
            <person name="Lucas S."/>
            <person name="Copeland A."/>
            <person name="Lapidus A."/>
            <person name="Glavina del Rio T."/>
            <person name="Dalin E."/>
            <person name="Tice H."/>
            <person name="Bruce D."/>
            <person name="Goodwin L."/>
            <person name="Pitluck S."/>
            <person name="Schmutz J."/>
            <person name="Larimer F."/>
            <person name="Land M."/>
            <person name="Hauser L."/>
            <person name="Kyrpides N."/>
            <person name="Mikhailova N."/>
            <person name="Liu Z."/>
            <person name="Li T."/>
            <person name="Zhao F."/>
            <person name="Overmann J."/>
            <person name="Bryant D.A."/>
            <person name="Richardson P."/>
        </authorList>
    </citation>
    <scope>NUCLEOTIDE SEQUENCE [LARGE SCALE GENOMIC DNA]</scope>
    <source>
        <strain>ATCC 35110 / GB-78</strain>
    </source>
</reference>
<gene>
    <name evidence="1" type="primary">rpmJ</name>
    <name type="ordered locus">Ctha_1110</name>
</gene>